<dbReference type="EMBL" id="CP001063">
    <property type="protein sequence ID" value="ACD06964.1"/>
    <property type="molecule type" value="Genomic_DNA"/>
</dbReference>
<dbReference type="RefSeq" id="WP_000050791.1">
    <property type="nucleotide sequence ID" value="NC_010658.1"/>
</dbReference>
<dbReference type="SMR" id="B2TV62"/>
<dbReference type="STRING" id="344609.SbBS512_E0772"/>
<dbReference type="KEGG" id="sbc:SbBS512_E0772"/>
<dbReference type="HOGENOM" id="CLU_063050_0_1_6"/>
<dbReference type="Proteomes" id="UP000001030">
    <property type="component" value="Chromosome"/>
</dbReference>
<dbReference type="GO" id="GO:0043590">
    <property type="term" value="C:bacterial nucleoid"/>
    <property type="evidence" value="ECO:0007669"/>
    <property type="project" value="TreeGrafter"/>
</dbReference>
<dbReference type="GO" id="GO:0005737">
    <property type="term" value="C:cytoplasm"/>
    <property type="evidence" value="ECO:0007669"/>
    <property type="project" value="UniProtKB-UniRule"/>
</dbReference>
<dbReference type="GO" id="GO:0003690">
    <property type="term" value="F:double-stranded DNA binding"/>
    <property type="evidence" value="ECO:0007669"/>
    <property type="project" value="TreeGrafter"/>
</dbReference>
<dbReference type="GO" id="GO:0003727">
    <property type="term" value="F:single-stranded RNA binding"/>
    <property type="evidence" value="ECO:0007669"/>
    <property type="project" value="TreeGrafter"/>
</dbReference>
<dbReference type="HAMAP" id="MF_00730">
    <property type="entry name" value="NdpA"/>
    <property type="match status" value="1"/>
</dbReference>
<dbReference type="InterPro" id="IPR007358">
    <property type="entry name" value="Nucleoid_associated_NdpA"/>
</dbReference>
<dbReference type="NCBIfam" id="NF001557">
    <property type="entry name" value="PRK00378.1"/>
    <property type="match status" value="1"/>
</dbReference>
<dbReference type="PANTHER" id="PTHR38772">
    <property type="match status" value="1"/>
</dbReference>
<dbReference type="PANTHER" id="PTHR38772:SF1">
    <property type="entry name" value="NUCLEOID-ASSOCIATED PROTEIN YEJK"/>
    <property type="match status" value="1"/>
</dbReference>
<dbReference type="Pfam" id="PF04245">
    <property type="entry name" value="NA37"/>
    <property type="match status" value="1"/>
</dbReference>
<gene>
    <name evidence="1" type="primary">yejK</name>
    <name type="ordered locus">SbBS512_E0772</name>
</gene>
<proteinExistence type="inferred from homology"/>
<name>NDPA_SHIB3</name>
<feature type="chain" id="PRO_1000132735" description="Nucleoid-associated protein YejK">
    <location>
        <begin position="1"/>
        <end position="335"/>
    </location>
</feature>
<keyword id="KW-0963">Cytoplasm</keyword>
<keyword id="KW-1185">Reference proteome</keyword>
<protein>
    <recommendedName>
        <fullName evidence="1">Nucleoid-associated protein YejK</fullName>
    </recommendedName>
</protein>
<sequence length="335" mass="37823">MSLDINQIALHQLIKRDEQNLELVLRDSLLEPTETVVEMVAELHRVYSAKNKAYGLFSEESELAQTLRLQRQGEEDFLAFSRAATGRLRDELAKYPFADGGFVLFCHYRYLAVEYLLVAVLSNLSSMRVNENLDINPTHYLDINHADIVARIDLTEWETNPESTRYLTFLKGRVGRKVADFFMDFLGASEGLNAKAQNRGLLQAVDDFTAEAQLDKAERQNVRQQVYSYCNEQLQAGEEIELESLSKELAGVSEVSFTKFAAEKGYELEESFPADRSTLRQLTKFAGSGGGLTINFDAMLLGERIFWDPATDTLTIKGTPPNLRDQLQRRTSGGN</sequence>
<accession>B2TV62</accession>
<organism>
    <name type="scientific">Shigella boydii serotype 18 (strain CDC 3083-94 / BS512)</name>
    <dbReference type="NCBI Taxonomy" id="344609"/>
    <lineage>
        <taxon>Bacteria</taxon>
        <taxon>Pseudomonadati</taxon>
        <taxon>Pseudomonadota</taxon>
        <taxon>Gammaproteobacteria</taxon>
        <taxon>Enterobacterales</taxon>
        <taxon>Enterobacteriaceae</taxon>
        <taxon>Shigella</taxon>
    </lineage>
</organism>
<comment type="subcellular location">
    <subcellularLocation>
        <location evidence="1">Cytoplasm</location>
        <location evidence="1">Nucleoid</location>
    </subcellularLocation>
</comment>
<comment type="similarity">
    <text evidence="1">Belongs to the YejK family.</text>
</comment>
<evidence type="ECO:0000255" key="1">
    <source>
        <dbReference type="HAMAP-Rule" id="MF_00730"/>
    </source>
</evidence>
<reference key="1">
    <citation type="submission" date="2008-05" db="EMBL/GenBank/DDBJ databases">
        <title>Complete sequence of Shigella boydii serotype 18 strain BS512.</title>
        <authorList>
            <person name="Rasko D.A."/>
            <person name="Rosovitz M."/>
            <person name="Maurelli A.T."/>
            <person name="Myers G."/>
            <person name="Seshadri R."/>
            <person name="Cer R."/>
            <person name="Jiang L."/>
            <person name="Ravel J."/>
            <person name="Sebastian Y."/>
        </authorList>
    </citation>
    <scope>NUCLEOTIDE SEQUENCE [LARGE SCALE GENOMIC DNA]</scope>
    <source>
        <strain>CDC 3083-94 / BS512</strain>
    </source>
</reference>